<sequence length="341" mass="36795">MAMLTIVVDAMGGDNAPACVVEGTVEALRESGNRFEILLIGQEDKVTPLLKEYESESLNMRFMHAPEVITMEDVPAIAVKSKQESSLVQGLKLCKAKEADAFVSAGNTGAMMAASLFVLGRLPGVQRPTIYAYFPRLGEGLTNIVDVGANVDCKPEHLVQFAEMLTIYQRYAASIDNPTVGLLNIGEEEGKGPEYLKQTWNLLKAAAEEKKINFIGNVEGHDILAGKASIVVCDGLVGNTILKFGESIPHFLGSLFKPALEKMVVSGKLDQSAAALAGQAFKQIFEPFDVETFGGVPFLGVDGISIVGHGRSSSRAIKNMIYMAEHMIEQRVNERIAAMLS</sequence>
<evidence type="ECO:0000255" key="1">
    <source>
        <dbReference type="HAMAP-Rule" id="MF_00019"/>
    </source>
</evidence>
<organism>
    <name type="scientific">Chlorobaculum parvum (strain DSM 263 / NCIMB 8327)</name>
    <name type="common">Chlorobium vibrioforme subsp. thiosulfatophilum</name>
    <dbReference type="NCBI Taxonomy" id="517417"/>
    <lineage>
        <taxon>Bacteria</taxon>
        <taxon>Pseudomonadati</taxon>
        <taxon>Chlorobiota</taxon>
        <taxon>Chlorobiia</taxon>
        <taxon>Chlorobiales</taxon>
        <taxon>Chlorobiaceae</taxon>
        <taxon>Chlorobaculum</taxon>
    </lineage>
</organism>
<keyword id="KW-0963">Cytoplasm</keyword>
<keyword id="KW-0444">Lipid biosynthesis</keyword>
<keyword id="KW-0443">Lipid metabolism</keyword>
<keyword id="KW-0594">Phospholipid biosynthesis</keyword>
<keyword id="KW-1208">Phospholipid metabolism</keyword>
<keyword id="KW-0808">Transferase</keyword>
<feature type="chain" id="PRO_1000089888" description="Phosphate acyltransferase">
    <location>
        <begin position="1"/>
        <end position="341"/>
    </location>
</feature>
<comment type="function">
    <text evidence="1">Catalyzes the reversible formation of acyl-phosphate (acyl-PO(4)) from acyl-[acyl-carrier-protein] (acyl-ACP). This enzyme utilizes acyl-ACP as fatty acyl donor, but not acyl-CoA.</text>
</comment>
<comment type="catalytic activity">
    <reaction evidence="1">
        <text>a fatty acyl-[ACP] + phosphate = an acyl phosphate + holo-[ACP]</text>
        <dbReference type="Rhea" id="RHEA:42292"/>
        <dbReference type="Rhea" id="RHEA-COMP:9685"/>
        <dbReference type="Rhea" id="RHEA-COMP:14125"/>
        <dbReference type="ChEBI" id="CHEBI:43474"/>
        <dbReference type="ChEBI" id="CHEBI:59918"/>
        <dbReference type="ChEBI" id="CHEBI:64479"/>
        <dbReference type="ChEBI" id="CHEBI:138651"/>
        <dbReference type="EC" id="2.3.1.274"/>
    </reaction>
</comment>
<comment type="pathway">
    <text evidence="1">Lipid metabolism; phospholipid metabolism.</text>
</comment>
<comment type="subunit">
    <text evidence="1">Homodimer. Probably interacts with PlsY.</text>
</comment>
<comment type="subcellular location">
    <subcellularLocation>
        <location evidence="1">Cytoplasm</location>
    </subcellularLocation>
    <text evidence="1">Associated with the membrane possibly through PlsY.</text>
</comment>
<comment type="similarity">
    <text evidence="1">Belongs to the PlsX family.</text>
</comment>
<protein>
    <recommendedName>
        <fullName evidence="1">Phosphate acyltransferase</fullName>
        <ecNumber evidence="1">2.3.1.274</ecNumber>
    </recommendedName>
    <alternativeName>
        <fullName evidence="1">Acyl-ACP phosphotransacylase</fullName>
    </alternativeName>
    <alternativeName>
        <fullName evidence="1">Acyl-[acyl-carrier-protein]--phosphate acyltransferase</fullName>
    </alternativeName>
    <alternativeName>
        <fullName evidence="1">Phosphate-acyl-ACP acyltransferase</fullName>
    </alternativeName>
</protein>
<gene>
    <name evidence="1" type="primary">plsX</name>
    <name type="ordered locus">Cpar_0132</name>
</gene>
<reference key="1">
    <citation type="submission" date="2008-06" db="EMBL/GenBank/DDBJ databases">
        <title>Complete sequence of Chlorobaculum parvum NCIB 8327.</title>
        <authorList>
            <consortium name="US DOE Joint Genome Institute"/>
            <person name="Lucas S."/>
            <person name="Copeland A."/>
            <person name="Lapidus A."/>
            <person name="Glavina del Rio T."/>
            <person name="Dalin E."/>
            <person name="Tice H."/>
            <person name="Bruce D."/>
            <person name="Goodwin L."/>
            <person name="Pitluck S."/>
            <person name="Schmutz J."/>
            <person name="Larimer F."/>
            <person name="Land M."/>
            <person name="Hauser L."/>
            <person name="Kyrpides N."/>
            <person name="Mikhailova N."/>
            <person name="Zhao F."/>
            <person name="Li T."/>
            <person name="Liu Z."/>
            <person name="Overmann J."/>
            <person name="Bryant D.A."/>
            <person name="Richardson P."/>
        </authorList>
    </citation>
    <scope>NUCLEOTIDE SEQUENCE [LARGE SCALE GENOMIC DNA]</scope>
    <source>
        <strain>DSM 263 / NCIMB 8327</strain>
    </source>
</reference>
<proteinExistence type="inferred from homology"/>
<accession>B3QRN8</accession>
<dbReference type="EC" id="2.3.1.274" evidence="1"/>
<dbReference type="EMBL" id="CP001099">
    <property type="protein sequence ID" value="ACF10560.1"/>
    <property type="molecule type" value="Genomic_DNA"/>
</dbReference>
<dbReference type="SMR" id="B3QRN8"/>
<dbReference type="STRING" id="517417.Cpar_0132"/>
<dbReference type="KEGG" id="cpc:Cpar_0132"/>
<dbReference type="eggNOG" id="COG0416">
    <property type="taxonomic scope" value="Bacteria"/>
</dbReference>
<dbReference type="HOGENOM" id="CLU_039379_1_1_10"/>
<dbReference type="UniPathway" id="UPA00085"/>
<dbReference type="Proteomes" id="UP000008811">
    <property type="component" value="Chromosome"/>
</dbReference>
<dbReference type="GO" id="GO:0005737">
    <property type="term" value="C:cytoplasm"/>
    <property type="evidence" value="ECO:0007669"/>
    <property type="project" value="UniProtKB-SubCell"/>
</dbReference>
<dbReference type="GO" id="GO:0043811">
    <property type="term" value="F:phosphate:acyl-[acyl carrier protein] acyltransferase activity"/>
    <property type="evidence" value="ECO:0007669"/>
    <property type="project" value="UniProtKB-UniRule"/>
</dbReference>
<dbReference type="GO" id="GO:0006633">
    <property type="term" value="P:fatty acid biosynthetic process"/>
    <property type="evidence" value="ECO:0007669"/>
    <property type="project" value="UniProtKB-UniRule"/>
</dbReference>
<dbReference type="GO" id="GO:0008654">
    <property type="term" value="P:phospholipid biosynthetic process"/>
    <property type="evidence" value="ECO:0007669"/>
    <property type="project" value="UniProtKB-KW"/>
</dbReference>
<dbReference type="Gene3D" id="3.40.718.10">
    <property type="entry name" value="Isopropylmalate Dehydrogenase"/>
    <property type="match status" value="1"/>
</dbReference>
<dbReference type="HAMAP" id="MF_00019">
    <property type="entry name" value="PlsX"/>
    <property type="match status" value="1"/>
</dbReference>
<dbReference type="InterPro" id="IPR003664">
    <property type="entry name" value="FA_synthesis"/>
</dbReference>
<dbReference type="InterPro" id="IPR012281">
    <property type="entry name" value="Phospholipid_synth_PlsX-like"/>
</dbReference>
<dbReference type="NCBIfam" id="TIGR00182">
    <property type="entry name" value="plsX"/>
    <property type="match status" value="1"/>
</dbReference>
<dbReference type="PANTHER" id="PTHR30100">
    <property type="entry name" value="FATTY ACID/PHOSPHOLIPID SYNTHESIS PROTEIN PLSX"/>
    <property type="match status" value="1"/>
</dbReference>
<dbReference type="PANTHER" id="PTHR30100:SF1">
    <property type="entry name" value="PHOSPHATE ACYLTRANSFERASE"/>
    <property type="match status" value="1"/>
</dbReference>
<dbReference type="Pfam" id="PF02504">
    <property type="entry name" value="FA_synthesis"/>
    <property type="match status" value="1"/>
</dbReference>
<dbReference type="PIRSF" id="PIRSF002465">
    <property type="entry name" value="Phsphlp_syn_PlsX"/>
    <property type="match status" value="1"/>
</dbReference>
<dbReference type="SUPFAM" id="SSF53659">
    <property type="entry name" value="Isocitrate/Isopropylmalate dehydrogenase-like"/>
    <property type="match status" value="1"/>
</dbReference>
<name>PLSX_CHLP8</name>